<protein>
    <recommendedName>
        <fullName evidence="1">Acetate kinase</fullName>
        <ecNumber evidence="1">2.7.2.1</ecNumber>
    </recommendedName>
    <alternativeName>
        <fullName evidence="1">Acetokinase</fullName>
    </alternativeName>
</protein>
<proteinExistence type="inferred from homology"/>
<name>ACKA_SHOC1</name>
<reference key="1">
    <citation type="submission" date="2003-10" db="EMBL/GenBank/DDBJ databases">
        <title>The complete genome sequence of the alkaliphilic Bacillus clausii KSM-K16.</title>
        <authorList>
            <person name="Takaki Y."/>
            <person name="Kageyama Y."/>
            <person name="Shimamura S."/>
            <person name="Suzuki H."/>
            <person name="Nishi S."/>
            <person name="Hatada Y."/>
            <person name="Kawai S."/>
            <person name="Ito S."/>
            <person name="Horikoshi K."/>
        </authorList>
    </citation>
    <scope>NUCLEOTIDE SEQUENCE [LARGE SCALE GENOMIC DNA]</scope>
    <source>
        <strain>KSM-K16</strain>
    </source>
</reference>
<feature type="chain" id="PRO_0000107533" description="Acetate kinase">
    <location>
        <begin position="1"/>
        <end position="395"/>
    </location>
</feature>
<feature type="active site" description="Proton donor/acceptor" evidence="1">
    <location>
        <position position="146"/>
    </location>
</feature>
<feature type="binding site" evidence="1">
    <location>
        <position position="8"/>
    </location>
    <ligand>
        <name>Mg(2+)</name>
        <dbReference type="ChEBI" id="CHEBI:18420"/>
    </ligand>
</feature>
<feature type="binding site" evidence="1">
    <location>
        <position position="15"/>
    </location>
    <ligand>
        <name>ATP</name>
        <dbReference type="ChEBI" id="CHEBI:30616"/>
    </ligand>
</feature>
<feature type="binding site" evidence="1">
    <location>
        <position position="89"/>
    </location>
    <ligand>
        <name>substrate</name>
    </ligand>
</feature>
<feature type="binding site" evidence="1">
    <location>
        <begin position="206"/>
        <end position="210"/>
    </location>
    <ligand>
        <name>ATP</name>
        <dbReference type="ChEBI" id="CHEBI:30616"/>
    </ligand>
</feature>
<feature type="binding site" evidence="1">
    <location>
        <begin position="281"/>
        <end position="283"/>
    </location>
    <ligand>
        <name>ATP</name>
        <dbReference type="ChEBI" id="CHEBI:30616"/>
    </ligand>
</feature>
<feature type="binding site" evidence="1">
    <location>
        <begin position="329"/>
        <end position="333"/>
    </location>
    <ligand>
        <name>ATP</name>
        <dbReference type="ChEBI" id="CHEBI:30616"/>
    </ligand>
</feature>
<feature type="binding site" evidence="1">
    <location>
        <position position="382"/>
    </location>
    <ligand>
        <name>Mg(2+)</name>
        <dbReference type="ChEBI" id="CHEBI:18420"/>
    </ligand>
</feature>
<feature type="site" description="Transition state stabilizer" evidence="1">
    <location>
        <position position="178"/>
    </location>
</feature>
<feature type="site" description="Transition state stabilizer" evidence="1">
    <location>
        <position position="239"/>
    </location>
</feature>
<accession>Q5WED5</accession>
<sequence length="395" mass="42575">MAKIIAINAGSSSLKFQLLAMPEETVIAKGLVERIGLKKSIFTIEANGQQHELTEDIPDHAAAVKLLLKDLTGRGIIASLEEIEGIGHRVVHGGEKFNDSVVITDEVLQGIEEVSELAPLHNPANITGIKAFKEVLPNVPAVAVFDTAFHQTMPESAFLYSLPYEYYEKYGIRKYGFHGTSHKYVTHRAAELMETPIEELRILSCHLGNGASIAAVKGGKSIDTSMGFTPLAGVTMGTRSGNIDPALIPYIMEKTGQSVEEVVATLNKKSGLLGITGFSSDLRDIEAAAKEGDERAQVALDVFASRIHKYVGSYAARMGGLDAIVFTAGIGENSATIRERVLKGLSFMGVDVDLEKNNVRGKEAFIEKAGAPVKIIVIPTNEEVMIARDTVRLTS</sequence>
<dbReference type="EC" id="2.7.2.1" evidence="1"/>
<dbReference type="EMBL" id="AP006627">
    <property type="protein sequence ID" value="BAD65275.1"/>
    <property type="molecule type" value="Genomic_DNA"/>
</dbReference>
<dbReference type="RefSeq" id="WP_011247583.1">
    <property type="nucleotide sequence ID" value="NC_006582.1"/>
</dbReference>
<dbReference type="SMR" id="Q5WED5"/>
<dbReference type="STRING" id="66692.ABC2740"/>
<dbReference type="KEGG" id="bcl:ABC2740"/>
<dbReference type="eggNOG" id="COG0282">
    <property type="taxonomic scope" value="Bacteria"/>
</dbReference>
<dbReference type="HOGENOM" id="CLU_020352_0_1_9"/>
<dbReference type="OrthoDB" id="9802453at2"/>
<dbReference type="UniPathway" id="UPA00340">
    <property type="reaction ID" value="UER00458"/>
</dbReference>
<dbReference type="Proteomes" id="UP000001168">
    <property type="component" value="Chromosome"/>
</dbReference>
<dbReference type="GO" id="GO:0005737">
    <property type="term" value="C:cytoplasm"/>
    <property type="evidence" value="ECO:0007669"/>
    <property type="project" value="UniProtKB-SubCell"/>
</dbReference>
<dbReference type="GO" id="GO:0008776">
    <property type="term" value="F:acetate kinase activity"/>
    <property type="evidence" value="ECO:0007669"/>
    <property type="project" value="UniProtKB-UniRule"/>
</dbReference>
<dbReference type="GO" id="GO:0005524">
    <property type="term" value="F:ATP binding"/>
    <property type="evidence" value="ECO:0007669"/>
    <property type="project" value="UniProtKB-KW"/>
</dbReference>
<dbReference type="GO" id="GO:0000287">
    <property type="term" value="F:magnesium ion binding"/>
    <property type="evidence" value="ECO:0007669"/>
    <property type="project" value="UniProtKB-UniRule"/>
</dbReference>
<dbReference type="GO" id="GO:0006083">
    <property type="term" value="P:acetate metabolic process"/>
    <property type="evidence" value="ECO:0007669"/>
    <property type="project" value="TreeGrafter"/>
</dbReference>
<dbReference type="GO" id="GO:0006085">
    <property type="term" value="P:acetyl-CoA biosynthetic process"/>
    <property type="evidence" value="ECO:0007669"/>
    <property type="project" value="UniProtKB-UniRule"/>
</dbReference>
<dbReference type="CDD" id="cd24010">
    <property type="entry name" value="ASKHA_NBD_AcK_PK"/>
    <property type="match status" value="1"/>
</dbReference>
<dbReference type="Gene3D" id="3.30.420.40">
    <property type="match status" value="2"/>
</dbReference>
<dbReference type="HAMAP" id="MF_00020">
    <property type="entry name" value="Acetate_kinase"/>
    <property type="match status" value="1"/>
</dbReference>
<dbReference type="InterPro" id="IPR004372">
    <property type="entry name" value="Ac/propionate_kinase"/>
</dbReference>
<dbReference type="InterPro" id="IPR000890">
    <property type="entry name" value="Aliphatic_acid_kin_short-chain"/>
</dbReference>
<dbReference type="InterPro" id="IPR023865">
    <property type="entry name" value="Aliphatic_acid_kinase_CS"/>
</dbReference>
<dbReference type="InterPro" id="IPR043129">
    <property type="entry name" value="ATPase_NBD"/>
</dbReference>
<dbReference type="NCBIfam" id="TIGR00016">
    <property type="entry name" value="ackA"/>
    <property type="match status" value="1"/>
</dbReference>
<dbReference type="PANTHER" id="PTHR21060">
    <property type="entry name" value="ACETATE KINASE"/>
    <property type="match status" value="1"/>
</dbReference>
<dbReference type="PANTHER" id="PTHR21060:SF15">
    <property type="entry name" value="ACETATE KINASE-RELATED"/>
    <property type="match status" value="1"/>
</dbReference>
<dbReference type="Pfam" id="PF00871">
    <property type="entry name" value="Acetate_kinase"/>
    <property type="match status" value="1"/>
</dbReference>
<dbReference type="PIRSF" id="PIRSF000722">
    <property type="entry name" value="Acetate_prop_kin"/>
    <property type="match status" value="1"/>
</dbReference>
<dbReference type="PRINTS" id="PR00471">
    <property type="entry name" value="ACETATEKNASE"/>
</dbReference>
<dbReference type="SUPFAM" id="SSF53067">
    <property type="entry name" value="Actin-like ATPase domain"/>
    <property type="match status" value="2"/>
</dbReference>
<dbReference type="PROSITE" id="PS01075">
    <property type="entry name" value="ACETATE_KINASE_1"/>
    <property type="match status" value="1"/>
</dbReference>
<dbReference type="PROSITE" id="PS01076">
    <property type="entry name" value="ACETATE_KINASE_2"/>
    <property type="match status" value="1"/>
</dbReference>
<gene>
    <name evidence="1" type="primary">ackA</name>
    <name type="ordered locus">ABC2740</name>
</gene>
<comment type="function">
    <text evidence="1">Catalyzes the formation of acetyl phosphate from acetate and ATP. Can also catalyze the reverse reaction.</text>
</comment>
<comment type="catalytic activity">
    <reaction evidence="1">
        <text>acetate + ATP = acetyl phosphate + ADP</text>
        <dbReference type="Rhea" id="RHEA:11352"/>
        <dbReference type="ChEBI" id="CHEBI:22191"/>
        <dbReference type="ChEBI" id="CHEBI:30089"/>
        <dbReference type="ChEBI" id="CHEBI:30616"/>
        <dbReference type="ChEBI" id="CHEBI:456216"/>
        <dbReference type="EC" id="2.7.2.1"/>
    </reaction>
</comment>
<comment type="cofactor">
    <cofactor evidence="1">
        <name>Mg(2+)</name>
        <dbReference type="ChEBI" id="CHEBI:18420"/>
    </cofactor>
    <cofactor evidence="1">
        <name>Mn(2+)</name>
        <dbReference type="ChEBI" id="CHEBI:29035"/>
    </cofactor>
    <text evidence="1">Mg(2+). Can also accept Mn(2+).</text>
</comment>
<comment type="pathway">
    <text evidence="1">Metabolic intermediate biosynthesis; acetyl-CoA biosynthesis; acetyl-CoA from acetate: step 1/2.</text>
</comment>
<comment type="subunit">
    <text evidence="1">Homodimer.</text>
</comment>
<comment type="subcellular location">
    <subcellularLocation>
        <location evidence="1">Cytoplasm</location>
    </subcellularLocation>
</comment>
<comment type="similarity">
    <text evidence="1">Belongs to the acetokinase family.</text>
</comment>
<organism>
    <name type="scientific">Shouchella clausii (strain KSM-K16)</name>
    <name type="common">Alkalihalobacillus clausii</name>
    <dbReference type="NCBI Taxonomy" id="66692"/>
    <lineage>
        <taxon>Bacteria</taxon>
        <taxon>Bacillati</taxon>
        <taxon>Bacillota</taxon>
        <taxon>Bacilli</taxon>
        <taxon>Bacillales</taxon>
        <taxon>Bacillaceae</taxon>
        <taxon>Shouchella</taxon>
    </lineage>
</organism>
<keyword id="KW-0067">ATP-binding</keyword>
<keyword id="KW-0963">Cytoplasm</keyword>
<keyword id="KW-0418">Kinase</keyword>
<keyword id="KW-0460">Magnesium</keyword>
<keyword id="KW-0479">Metal-binding</keyword>
<keyword id="KW-0547">Nucleotide-binding</keyword>
<keyword id="KW-1185">Reference proteome</keyword>
<keyword id="KW-0808">Transferase</keyword>
<evidence type="ECO:0000255" key="1">
    <source>
        <dbReference type="HAMAP-Rule" id="MF_00020"/>
    </source>
</evidence>